<evidence type="ECO:0000255" key="1">
    <source>
        <dbReference type="HAMAP-Rule" id="MF_01446"/>
    </source>
</evidence>
<name>KAE1_METAR</name>
<accession>Q0W2P3</accession>
<sequence length="323" mass="35097">MQCSRVLGIEGTAWSLSAAIVGWDKVYAEASHPYVPETGGIHPMAAAQHHASHVSQIVRQVLDSGYDFDGVAFSRGPGLGPCLRTVATAARALALAYDVPLMGVNHCVAHIEVGRWQTGCHDPVVLYVSGANSQVIAFRRGRYRVFGETLDIGIGNALDKFGRHLGLQHPGGPKIEALAREGKNYIHLPYVVKGMDLSYSGMMSAAKEAAAKYLKEDVCFSLQENAFAMLVEVTERALAHTGKNEVLIGGGVGANMRLQSMLDTMCRDRGAKFYAPPRKFFGDNGSMIAYTGLLQLKYDQTIPVEDSAVNPIYRTDEVEIPWL</sequence>
<protein>
    <recommendedName>
        <fullName evidence="1">tRNA N6-adenosine threonylcarbamoyltransferase</fullName>
        <ecNumber evidence="1">2.3.1.234</ecNumber>
    </recommendedName>
    <alternativeName>
        <fullName evidence="1">N6-L-threonylcarbamoyladenine synthase</fullName>
        <shortName evidence="1">t(6)A synthase</shortName>
    </alternativeName>
    <alternativeName>
        <fullName evidence="1">t(6)A37 threonylcarbamoyladenosine biosynthesis protein Kae1</fullName>
    </alternativeName>
    <alternativeName>
        <fullName evidence="1">tRNA threonylcarbamoyladenosine biosynthesis protein Kae1</fullName>
    </alternativeName>
</protein>
<dbReference type="EC" id="2.3.1.234" evidence="1"/>
<dbReference type="EMBL" id="AM114193">
    <property type="protein sequence ID" value="CAJ37350.1"/>
    <property type="molecule type" value="Genomic_DNA"/>
</dbReference>
<dbReference type="RefSeq" id="WP_012035231.1">
    <property type="nucleotide sequence ID" value="NC_009464.1"/>
</dbReference>
<dbReference type="SMR" id="Q0W2P3"/>
<dbReference type="STRING" id="351160.RCIX2232"/>
<dbReference type="GeneID" id="5145245"/>
<dbReference type="KEGG" id="rci:RCIX2232"/>
<dbReference type="PATRIC" id="fig|351160.9.peg.933"/>
<dbReference type="eggNOG" id="arCOG01183">
    <property type="taxonomic scope" value="Archaea"/>
</dbReference>
<dbReference type="OrthoDB" id="6818at2157"/>
<dbReference type="Proteomes" id="UP000000663">
    <property type="component" value="Chromosome"/>
</dbReference>
<dbReference type="GO" id="GO:0005737">
    <property type="term" value="C:cytoplasm"/>
    <property type="evidence" value="ECO:0007669"/>
    <property type="project" value="UniProtKB-SubCell"/>
</dbReference>
<dbReference type="GO" id="GO:0000408">
    <property type="term" value="C:EKC/KEOPS complex"/>
    <property type="evidence" value="ECO:0007669"/>
    <property type="project" value="InterPro"/>
</dbReference>
<dbReference type="GO" id="GO:0005506">
    <property type="term" value="F:iron ion binding"/>
    <property type="evidence" value="ECO:0007669"/>
    <property type="project" value="UniProtKB-UniRule"/>
</dbReference>
<dbReference type="GO" id="GO:0061711">
    <property type="term" value="F:N(6)-L-threonylcarbamoyladenine synthase activity"/>
    <property type="evidence" value="ECO:0007669"/>
    <property type="project" value="UniProtKB-EC"/>
</dbReference>
<dbReference type="GO" id="GO:0002949">
    <property type="term" value="P:tRNA threonylcarbamoyladenosine modification"/>
    <property type="evidence" value="ECO:0007669"/>
    <property type="project" value="UniProtKB-UniRule"/>
</dbReference>
<dbReference type="FunFam" id="3.30.420.40:FF:000038">
    <property type="entry name" value="Probable tRNA N6-adenosine threonylcarbamoyltransferase"/>
    <property type="match status" value="1"/>
</dbReference>
<dbReference type="Gene3D" id="3.30.420.40">
    <property type="match status" value="2"/>
</dbReference>
<dbReference type="HAMAP" id="MF_01446">
    <property type="entry name" value="Kae1"/>
    <property type="match status" value="1"/>
</dbReference>
<dbReference type="InterPro" id="IPR043129">
    <property type="entry name" value="ATPase_NBD"/>
</dbReference>
<dbReference type="InterPro" id="IPR000905">
    <property type="entry name" value="Gcp-like_dom"/>
</dbReference>
<dbReference type="InterPro" id="IPR017861">
    <property type="entry name" value="KAE1/TsaD"/>
</dbReference>
<dbReference type="InterPro" id="IPR034680">
    <property type="entry name" value="Kae1_archaea_euk"/>
</dbReference>
<dbReference type="InterPro" id="IPR017860">
    <property type="entry name" value="Peptidase_M22_CS"/>
</dbReference>
<dbReference type="NCBIfam" id="TIGR03722">
    <property type="entry name" value="arch_KAE1"/>
    <property type="match status" value="1"/>
</dbReference>
<dbReference type="NCBIfam" id="TIGR00329">
    <property type="entry name" value="gcp_kae1"/>
    <property type="match status" value="1"/>
</dbReference>
<dbReference type="NCBIfam" id="NF007174">
    <property type="entry name" value="PRK09605.1"/>
    <property type="match status" value="1"/>
</dbReference>
<dbReference type="PANTHER" id="PTHR11735">
    <property type="entry name" value="TRNA N6-ADENOSINE THREONYLCARBAMOYLTRANSFERASE"/>
    <property type="match status" value="1"/>
</dbReference>
<dbReference type="PANTHER" id="PTHR11735:SF14">
    <property type="entry name" value="TRNA N6-ADENOSINE THREONYLCARBAMOYLTRANSFERASE"/>
    <property type="match status" value="1"/>
</dbReference>
<dbReference type="Pfam" id="PF00814">
    <property type="entry name" value="TsaD"/>
    <property type="match status" value="1"/>
</dbReference>
<dbReference type="PRINTS" id="PR00789">
    <property type="entry name" value="OSIALOPTASE"/>
</dbReference>
<dbReference type="SUPFAM" id="SSF53067">
    <property type="entry name" value="Actin-like ATPase domain"/>
    <property type="match status" value="1"/>
</dbReference>
<dbReference type="PROSITE" id="PS01016">
    <property type="entry name" value="GLYCOPROTEASE"/>
    <property type="match status" value="1"/>
</dbReference>
<reference key="1">
    <citation type="journal article" date="2006" name="Science">
        <title>Genome of rice cluster I archaea -- the key methane producers in the rice rhizosphere.</title>
        <authorList>
            <person name="Erkel C."/>
            <person name="Kube M."/>
            <person name="Reinhardt R."/>
            <person name="Liesack W."/>
        </authorList>
    </citation>
    <scope>NUCLEOTIDE SEQUENCE [LARGE SCALE GENOMIC DNA]</scope>
    <source>
        <strain>DSM 22066 / NBRC 105507 / MRE50</strain>
    </source>
</reference>
<keyword id="KW-0012">Acyltransferase</keyword>
<keyword id="KW-0963">Cytoplasm</keyword>
<keyword id="KW-0408">Iron</keyword>
<keyword id="KW-0479">Metal-binding</keyword>
<keyword id="KW-1185">Reference proteome</keyword>
<keyword id="KW-0808">Transferase</keyword>
<keyword id="KW-0819">tRNA processing</keyword>
<organism>
    <name type="scientific">Methanocella arvoryzae (strain DSM 22066 / NBRC 105507 / MRE50)</name>
    <dbReference type="NCBI Taxonomy" id="351160"/>
    <lineage>
        <taxon>Archaea</taxon>
        <taxon>Methanobacteriati</taxon>
        <taxon>Methanobacteriota</taxon>
        <taxon>Stenosarchaea group</taxon>
        <taxon>Methanomicrobia</taxon>
        <taxon>Methanocellales</taxon>
        <taxon>Methanocellaceae</taxon>
        <taxon>Methanocella</taxon>
    </lineage>
</organism>
<feature type="chain" id="PRO_0000303648" description="tRNA N6-adenosine threonylcarbamoyltransferase">
    <location>
        <begin position="1"/>
        <end position="323"/>
    </location>
</feature>
<feature type="binding site" evidence="1">
    <location>
        <position position="106"/>
    </location>
    <ligand>
        <name>Fe cation</name>
        <dbReference type="ChEBI" id="CHEBI:24875"/>
    </ligand>
</feature>
<feature type="binding site" evidence="1">
    <location>
        <position position="110"/>
    </location>
    <ligand>
        <name>Fe cation</name>
        <dbReference type="ChEBI" id="CHEBI:24875"/>
    </ligand>
</feature>
<feature type="binding site" evidence="1">
    <location>
        <begin position="127"/>
        <end position="131"/>
    </location>
    <ligand>
        <name>substrate</name>
    </ligand>
</feature>
<feature type="binding site" evidence="1">
    <location>
        <position position="127"/>
    </location>
    <ligand>
        <name>Fe cation</name>
        <dbReference type="ChEBI" id="CHEBI:24875"/>
    </ligand>
</feature>
<feature type="binding site" evidence="1">
    <location>
        <position position="159"/>
    </location>
    <ligand>
        <name>substrate</name>
    </ligand>
</feature>
<feature type="binding site" evidence="1">
    <location>
        <position position="172"/>
    </location>
    <ligand>
        <name>substrate</name>
    </ligand>
</feature>
<feature type="binding site" evidence="1">
    <location>
        <position position="176"/>
    </location>
    <ligand>
        <name>substrate</name>
    </ligand>
</feature>
<feature type="binding site" evidence="1">
    <location>
        <position position="255"/>
    </location>
    <ligand>
        <name>substrate</name>
    </ligand>
</feature>
<feature type="binding site" evidence="1">
    <location>
        <position position="283"/>
    </location>
    <ligand>
        <name>Fe cation</name>
        <dbReference type="ChEBI" id="CHEBI:24875"/>
    </ligand>
</feature>
<proteinExistence type="inferred from homology"/>
<gene>
    <name evidence="1" type="primary">kae1</name>
    <name type="ordered locus">UNCMA_09020</name>
    <name type="ORF">RCIX2232</name>
</gene>
<comment type="function">
    <text evidence="1">Required for the formation of a threonylcarbamoyl group on adenosine at position 37 (t(6)A37) in tRNAs that read codons beginning with adenine. Is a component of the KEOPS complex that is probably involved in the transfer of the threonylcarbamoyl moiety of threonylcarbamoyl-AMP (TC-AMP) to the N6 group of A37. Kae1 likely plays a direct catalytic role in this reaction, but requires other protein(s) of the complex to fulfill this activity.</text>
</comment>
<comment type="catalytic activity">
    <reaction evidence="1">
        <text>L-threonylcarbamoyladenylate + adenosine(37) in tRNA = N(6)-L-threonylcarbamoyladenosine(37) in tRNA + AMP + H(+)</text>
        <dbReference type="Rhea" id="RHEA:37059"/>
        <dbReference type="Rhea" id="RHEA-COMP:10162"/>
        <dbReference type="Rhea" id="RHEA-COMP:10163"/>
        <dbReference type="ChEBI" id="CHEBI:15378"/>
        <dbReference type="ChEBI" id="CHEBI:73682"/>
        <dbReference type="ChEBI" id="CHEBI:74411"/>
        <dbReference type="ChEBI" id="CHEBI:74418"/>
        <dbReference type="ChEBI" id="CHEBI:456215"/>
        <dbReference type="EC" id="2.3.1.234"/>
    </reaction>
</comment>
<comment type="cofactor">
    <cofactor evidence="1">
        <name>Fe(2+)</name>
        <dbReference type="ChEBI" id="CHEBI:29033"/>
    </cofactor>
    <text evidence="1">Binds 1 Fe(2+) ion per subunit.</text>
</comment>
<comment type="subunit">
    <text evidence="1">Monomer. Component of the KEOPS complex that consists of Kae1, Bud32, Cgi121 and Pcc1; the whole complex dimerizes.</text>
</comment>
<comment type="subcellular location">
    <subcellularLocation>
        <location evidence="1">Cytoplasm</location>
    </subcellularLocation>
</comment>
<comment type="similarity">
    <text evidence="1">Belongs to the KAE1 / TsaD family.</text>
</comment>